<sequence length="257" mass="29127">MLIFLSPAKSLDYKTPPHVATFTQPAYLKQSETLIKQLRKLSPADIANLMHLSDPLALLNFNRYAEWSLPFTPENAKQAVLAFDGDVYDGLAAKNLTADDLDFAQQQVRILSGLYGILKPLDLVQPYRLEMGTRFANKAGKDLYAFWGERLLEAINAELAGMSRPVVLNLASEEYFKAAVGRKINGEVIQPVFEDWKNGKYKIISFYAKRARGLMTRYAVVNRLSEPEGLKAFDYDGYAFVPEVSDDKSWVFRRRES</sequence>
<feature type="chain" id="PRO_0000262011" description="UPF0246 protein Daro_2893">
    <location>
        <begin position="1"/>
        <end position="257"/>
    </location>
</feature>
<proteinExistence type="inferred from homology"/>
<dbReference type="EMBL" id="CP000089">
    <property type="protein sequence ID" value="AAZ47623.1"/>
    <property type="molecule type" value="Genomic_DNA"/>
</dbReference>
<dbReference type="SMR" id="Q47C08"/>
<dbReference type="STRING" id="159087.Daro_2893"/>
<dbReference type="KEGG" id="dar:Daro_2893"/>
<dbReference type="eggNOG" id="COG3022">
    <property type="taxonomic scope" value="Bacteria"/>
</dbReference>
<dbReference type="HOGENOM" id="CLU_061989_0_0_4"/>
<dbReference type="OrthoDB" id="9777133at2"/>
<dbReference type="GO" id="GO:0005829">
    <property type="term" value="C:cytosol"/>
    <property type="evidence" value="ECO:0007669"/>
    <property type="project" value="TreeGrafter"/>
</dbReference>
<dbReference type="GO" id="GO:0033194">
    <property type="term" value="P:response to hydroperoxide"/>
    <property type="evidence" value="ECO:0007669"/>
    <property type="project" value="TreeGrafter"/>
</dbReference>
<dbReference type="HAMAP" id="MF_00652">
    <property type="entry name" value="UPF0246"/>
    <property type="match status" value="1"/>
</dbReference>
<dbReference type="InterPro" id="IPR005583">
    <property type="entry name" value="YaaA"/>
</dbReference>
<dbReference type="NCBIfam" id="NF002541">
    <property type="entry name" value="PRK02101.1-1"/>
    <property type="match status" value="1"/>
</dbReference>
<dbReference type="NCBIfam" id="NF002542">
    <property type="entry name" value="PRK02101.1-3"/>
    <property type="match status" value="1"/>
</dbReference>
<dbReference type="PANTHER" id="PTHR30283:SF4">
    <property type="entry name" value="PEROXIDE STRESS RESISTANCE PROTEIN YAAA"/>
    <property type="match status" value="1"/>
</dbReference>
<dbReference type="PANTHER" id="PTHR30283">
    <property type="entry name" value="PEROXIDE STRESS RESPONSE PROTEIN YAAA"/>
    <property type="match status" value="1"/>
</dbReference>
<dbReference type="Pfam" id="PF03883">
    <property type="entry name" value="H2O2_YaaD"/>
    <property type="match status" value="1"/>
</dbReference>
<protein>
    <recommendedName>
        <fullName evidence="1">UPF0246 protein Daro_2893</fullName>
    </recommendedName>
</protein>
<name>Y2893_DECAR</name>
<accession>Q47C08</accession>
<reference key="1">
    <citation type="journal article" date="2009" name="BMC Genomics">
        <title>Metabolic analysis of the soil microbe Dechloromonas aromatica str. RCB: indications of a surprisingly complex life-style and cryptic anaerobic pathways for aromatic degradation.</title>
        <authorList>
            <person name="Salinero K.K."/>
            <person name="Keller K."/>
            <person name="Feil W.S."/>
            <person name="Feil H."/>
            <person name="Trong S."/>
            <person name="Di Bartolo G."/>
            <person name="Lapidus A."/>
        </authorList>
    </citation>
    <scope>NUCLEOTIDE SEQUENCE [LARGE SCALE GENOMIC DNA]</scope>
    <source>
        <strain>RCB</strain>
    </source>
</reference>
<organism>
    <name type="scientific">Dechloromonas aromatica (strain RCB)</name>
    <dbReference type="NCBI Taxonomy" id="159087"/>
    <lineage>
        <taxon>Bacteria</taxon>
        <taxon>Pseudomonadati</taxon>
        <taxon>Pseudomonadota</taxon>
        <taxon>Betaproteobacteria</taxon>
        <taxon>Rhodocyclales</taxon>
        <taxon>Azonexaceae</taxon>
        <taxon>Dechloromonas</taxon>
    </lineage>
</organism>
<gene>
    <name type="ordered locus">Daro_2893</name>
</gene>
<evidence type="ECO:0000255" key="1">
    <source>
        <dbReference type="HAMAP-Rule" id="MF_00652"/>
    </source>
</evidence>
<comment type="similarity">
    <text evidence="1">Belongs to the UPF0246 family.</text>
</comment>